<gene>
    <name evidence="1" type="primary">acpP</name>
    <name type="ordered locus">P9215_18821</name>
</gene>
<name>ACP_PROM2</name>
<dbReference type="EMBL" id="CP000825">
    <property type="protein sequence ID" value="ABV51495.1"/>
    <property type="molecule type" value="Genomic_DNA"/>
</dbReference>
<dbReference type="RefSeq" id="WP_002808065.1">
    <property type="nucleotide sequence ID" value="NC_009840.1"/>
</dbReference>
<dbReference type="SMR" id="A8G7B4"/>
<dbReference type="STRING" id="93060.P9215_18821"/>
<dbReference type="KEGG" id="pmh:P9215_18821"/>
<dbReference type="eggNOG" id="COG0236">
    <property type="taxonomic scope" value="Bacteria"/>
</dbReference>
<dbReference type="HOGENOM" id="CLU_108696_5_1_3"/>
<dbReference type="OrthoDB" id="9804551at2"/>
<dbReference type="UniPathway" id="UPA00094"/>
<dbReference type="Proteomes" id="UP000002014">
    <property type="component" value="Chromosome"/>
</dbReference>
<dbReference type="GO" id="GO:0005829">
    <property type="term" value="C:cytosol"/>
    <property type="evidence" value="ECO:0007669"/>
    <property type="project" value="TreeGrafter"/>
</dbReference>
<dbReference type="GO" id="GO:0016020">
    <property type="term" value="C:membrane"/>
    <property type="evidence" value="ECO:0007669"/>
    <property type="project" value="GOC"/>
</dbReference>
<dbReference type="GO" id="GO:0000035">
    <property type="term" value="F:acyl binding"/>
    <property type="evidence" value="ECO:0007669"/>
    <property type="project" value="TreeGrafter"/>
</dbReference>
<dbReference type="GO" id="GO:0000036">
    <property type="term" value="F:acyl carrier activity"/>
    <property type="evidence" value="ECO:0007669"/>
    <property type="project" value="UniProtKB-UniRule"/>
</dbReference>
<dbReference type="GO" id="GO:0009245">
    <property type="term" value="P:lipid A biosynthetic process"/>
    <property type="evidence" value="ECO:0007669"/>
    <property type="project" value="TreeGrafter"/>
</dbReference>
<dbReference type="FunFam" id="1.10.1200.10:FF:000003">
    <property type="entry name" value="Acyl carrier protein"/>
    <property type="match status" value="1"/>
</dbReference>
<dbReference type="Gene3D" id="1.10.1200.10">
    <property type="entry name" value="ACP-like"/>
    <property type="match status" value="1"/>
</dbReference>
<dbReference type="HAMAP" id="MF_01217">
    <property type="entry name" value="Acyl_carrier"/>
    <property type="match status" value="1"/>
</dbReference>
<dbReference type="InterPro" id="IPR003231">
    <property type="entry name" value="ACP"/>
</dbReference>
<dbReference type="InterPro" id="IPR036736">
    <property type="entry name" value="ACP-like_sf"/>
</dbReference>
<dbReference type="InterPro" id="IPR009081">
    <property type="entry name" value="PP-bd_ACP"/>
</dbReference>
<dbReference type="InterPro" id="IPR006162">
    <property type="entry name" value="Ppantetheine_attach_site"/>
</dbReference>
<dbReference type="NCBIfam" id="TIGR00517">
    <property type="entry name" value="acyl_carrier"/>
    <property type="match status" value="1"/>
</dbReference>
<dbReference type="NCBIfam" id="NF002148">
    <property type="entry name" value="PRK00982.1-2"/>
    <property type="match status" value="1"/>
</dbReference>
<dbReference type="NCBIfam" id="NF002150">
    <property type="entry name" value="PRK00982.1-4"/>
    <property type="match status" value="1"/>
</dbReference>
<dbReference type="NCBIfam" id="NF002151">
    <property type="entry name" value="PRK00982.1-5"/>
    <property type="match status" value="1"/>
</dbReference>
<dbReference type="PANTHER" id="PTHR20863">
    <property type="entry name" value="ACYL CARRIER PROTEIN"/>
    <property type="match status" value="1"/>
</dbReference>
<dbReference type="PANTHER" id="PTHR20863:SF76">
    <property type="entry name" value="CARRIER DOMAIN-CONTAINING PROTEIN"/>
    <property type="match status" value="1"/>
</dbReference>
<dbReference type="Pfam" id="PF00550">
    <property type="entry name" value="PP-binding"/>
    <property type="match status" value="1"/>
</dbReference>
<dbReference type="SUPFAM" id="SSF47336">
    <property type="entry name" value="ACP-like"/>
    <property type="match status" value="1"/>
</dbReference>
<dbReference type="PROSITE" id="PS50075">
    <property type="entry name" value="CARRIER"/>
    <property type="match status" value="1"/>
</dbReference>
<dbReference type="PROSITE" id="PS00012">
    <property type="entry name" value="PHOSPHOPANTETHEINE"/>
    <property type="match status" value="1"/>
</dbReference>
<feature type="chain" id="PRO_1000066653" description="Acyl carrier protein">
    <location>
        <begin position="1"/>
        <end position="79"/>
    </location>
</feature>
<feature type="domain" description="Carrier" evidence="2">
    <location>
        <begin position="3"/>
        <end position="78"/>
    </location>
</feature>
<feature type="modified residue" description="O-(pantetheine 4'-phosphoryl)serine" evidence="2">
    <location>
        <position position="38"/>
    </location>
</feature>
<sequence>MSQEILEKVCSIVSEQLSVEAGEVKSDSNFQNDLGADSLDTVELVMALEEAFDIEIPDEAAEGIATVGDAVKFIEEKKG</sequence>
<keyword id="KW-0963">Cytoplasm</keyword>
<keyword id="KW-0275">Fatty acid biosynthesis</keyword>
<keyword id="KW-0276">Fatty acid metabolism</keyword>
<keyword id="KW-0444">Lipid biosynthesis</keyword>
<keyword id="KW-0443">Lipid metabolism</keyword>
<keyword id="KW-0596">Phosphopantetheine</keyword>
<keyword id="KW-0597">Phosphoprotein</keyword>
<accession>A8G7B4</accession>
<evidence type="ECO:0000255" key="1">
    <source>
        <dbReference type="HAMAP-Rule" id="MF_01217"/>
    </source>
</evidence>
<evidence type="ECO:0000255" key="2">
    <source>
        <dbReference type="PROSITE-ProRule" id="PRU00258"/>
    </source>
</evidence>
<proteinExistence type="inferred from homology"/>
<comment type="function">
    <text evidence="1">Carrier of the growing fatty acid chain in fatty acid biosynthesis.</text>
</comment>
<comment type="pathway">
    <text evidence="1">Lipid metabolism; fatty acid biosynthesis.</text>
</comment>
<comment type="subcellular location">
    <subcellularLocation>
        <location evidence="1">Cytoplasm</location>
    </subcellularLocation>
</comment>
<comment type="PTM">
    <text evidence="1">4'-phosphopantetheine is transferred from CoA to a specific serine of apo-ACP by AcpS. This modification is essential for activity because fatty acids are bound in thioester linkage to the sulfhydryl of the prosthetic group.</text>
</comment>
<comment type="similarity">
    <text evidence="1">Belongs to the acyl carrier protein (ACP) family.</text>
</comment>
<reference key="1">
    <citation type="journal article" date="2007" name="PLoS Genet.">
        <title>Patterns and implications of gene gain and loss in the evolution of Prochlorococcus.</title>
        <authorList>
            <person name="Kettler G.C."/>
            <person name="Martiny A.C."/>
            <person name="Huang K."/>
            <person name="Zucker J."/>
            <person name="Coleman M.L."/>
            <person name="Rodrigue S."/>
            <person name="Chen F."/>
            <person name="Lapidus A."/>
            <person name="Ferriera S."/>
            <person name="Johnson J."/>
            <person name="Steglich C."/>
            <person name="Church G.M."/>
            <person name="Richardson P."/>
            <person name="Chisholm S.W."/>
        </authorList>
    </citation>
    <scope>NUCLEOTIDE SEQUENCE [LARGE SCALE GENOMIC DNA]</scope>
    <source>
        <strain>MIT 9215</strain>
    </source>
</reference>
<organism>
    <name type="scientific">Prochlorococcus marinus (strain MIT 9215)</name>
    <dbReference type="NCBI Taxonomy" id="93060"/>
    <lineage>
        <taxon>Bacteria</taxon>
        <taxon>Bacillati</taxon>
        <taxon>Cyanobacteriota</taxon>
        <taxon>Cyanophyceae</taxon>
        <taxon>Synechococcales</taxon>
        <taxon>Prochlorococcaceae</taxon>
        <taxon>Prochlorococcus</taxon>
    </lineage>
</organism>
<protein>
    <recommendedName>
        <fullName evidence="1">Acyl carrier protein</fullName>
        <shortName evidence="1">ACP</shortName>
    </recommendedName>
</protein>